<comment type="subunit">
    <text evidence="5">Interacts with AKR2A.</text>
</comment>
<comment type="subcellular location">
    <subcellularLocation>
        <location evidence="3 4 6 8">Plastid</location>
        <location evidence="3 4 6 8">Chloroplast outer membrane</location>
        <topology evidence="3">Single-pass membrane protein</topology>
    </subcellularLocation>
    <text evidence="5 8">The targeting to chloroplasts is facilitated by AKR2A and HSP17.8.</text>
</comment>
<comment type="tissue specificity">
    <text evidence="3">Confined to green tissues.</text>
</comment>
<comment type="domain">
    <text evidence="3">The transmembrane plays critical roles in migration to the chloroplasts and/or subsequent insertion into the membrane.</text>
</comment>
<name>OEP7_ARATH</name>
<protein>
    <recommendedName>
        <fullName evidence="9">Outer envelope membrane protein 7</fullName>
        <shortName evidence="9">AtOEP7</shortName>
    </recommendedName>
</protein>
<proteinExistence type="evidence at protein level"/>
<sequence length="64" mass="6764">MGKTSGAKQATVVVAAMALGWLAIEIAFKPFLDKFRSSIDKSDPTKDPDDFDTAATATTSKEGL</sequence>
<gene>
    <name evidence="9" type="primary">OEP7</name>
    <name evidence="11" type="ordered locus">At3g52420</name>
    <name evidence="12" type="ORF">F22O6.200</name>
</gene>
<keyword id="KW-0150">Chloroplast</keyword>
<keyword id="KW-0472">Membrane</keyword>
<keyword id="KW-0934">Plastid</keyword>
<keyword id="KW-1002">Plastid outer membrane</keyword>
<keyword id="KW-1185">Reference proteome</keyword>
<keyword id="KW-0812">Transmembrane</keyword>
<keyword id="KW-1133">Transmembrane helix</keyword>
<organism evidence="13">
    <name type="scientific">Arabidopsis thaliana</name>
    <name type="common">Mouse-ear cress</name>
    <dbReference type="NCBI Taxonomy" id="3702"/>
    <lineage>
        <taxon>Eukaryota</taxon>
        <taxon>Viridiplantae</taxon>
        <taxon>Streptophyta</taxon>
        <taxon>Embryophyta</taxon>
        <taxon>Tracheophyta</taxon>
        <taxon>Spermatophyta</taxon>
        <taxon>Magnoliopsida</taxon>
        <taxon>eudicotyledons</taxon>
        <taxon>Gunneridae</taxon>
        <taxon>Pentapetalae</taxon>
        <taxon>rosids</taxon>
        <taxon>malvids</taxon>
        <taxon>Brassicales</taxon>
        <taxon>Brassicaceae</taxon>
        <taxon>Camelineae</taxon>
        <taxon>Arabidopsis</taxon>
    </lineage>
</organism>
<evidence type="ECO:0000255" key="1"/>
<evidence type="ECO:0000256" key="2">
    <source>
        <dbReference type="SAM" id="MobiDB-lite"/>
    </source>
</evidence>
<evidence type="ECO:0000269" key="3">
    <source>
    </source>
</evidence>
<evidence type="ECO:0000269" key="4">
    <source>
    </source>
</evidence>
<evidence type="ECO:0000269" key="5">
    <source>
    </source>
</evidence>
<evidence type="ECO:0000269" key="6">
    <source>
    </source>
</evidence>
<evidence type="ECO:0000269" key="7">
    <source>
    </source>
</evidence>
<evidence type="ECO:0000269" key="8">
    <source>
    </source>
</evidence>
<evidence type="ECO:0000303" key="9">
    <source>
    </source>
</evidence>
<evidence type="ECO:0000305" key="10">
    <source>
    </source>
</evidence>
<evidence type="ECO:0000312" key="11">
    <source>
        <dbReference type="EMBL" id="AEE78944.1"/>
    </source>
</evidence>
<evidence type="ECO:0000312" key="12">
    <source>
        <dbReference type="EMBL" id="CAB43440.1"/>
    </source>
</evidence>
<evidence type="ECO:0000312" key="13">
    <source>
        <dbReference type="Proteomes" id="UP000006548"/>
    </source>
</evidence>
<feature type="chain" id="PRO_0000434612" description="Outer envelope membrane protein 7">
    <location>
        <begin position="1"/>
        <end position="64"/>
    </location>
</feature>
<feature type="topological domain" description="Chloroplast intermembrane" evidence="10">
    <location>
        <begin position="1"/>
        <end position="11"/>
    </location>
</feature>
<feature type="transmembrane region" description="Helical" evidence="1">
    <location>
        <begin position="12"/>
        <end position="32"/>
    </location>
</feature>
<feature type="topological domain" description="Cytoplasmic" evidence="10">
    <location>
        <begin position="33"/>
        <end position="64"/>
    </location>
</feature>
<feature type="region of interest" description="Disordered" evidence="2">
    <location>
        <begin position="39"/>
        <end position="64"/>
    </location>
</feature>
<feature type="short sequence motif" description="AKR2A-binding sequence (ABS) required for chloroplast outer envelope membrane targeting" evidence="3 7">
    <location>
        <begin position="29"/>
        <end position="35"/>
    </location>
</feature>
<feature type="compositionally biased region" description="Basic and acidic residues" evidence="2">
    <location>
        <begin position="39"/>
        <end position="48"/>
    </location>
</feature>
<feature type="compositionally biased region" description="Low complexity" evidence="2">
    <location>
        <begin position="53"/>
        <end position="64"/>
    </location>
</feature>
<feature type="mutagenesis site" description="Normal targeting to the chloroplast." evidence="3">
    <original>ATVVVAAMALGW</original>
    <variation>IIIIIIIIIIII</variation>
    <location>
        <begin position="10"/>
        <end position="21"/>
    </location>
</feature>
<feature type="mutagenesis site" description="Impaired targeting to the chloroplast resulting in the formation of large aggregates in the cytoplasm." evidence="3">
    <original>ATVVVAAMALGW</original>
    <variation>MAMMMMMMAMMM</variation>
    <variation>FFFFFFFFFFFF</variation>
    <location>
        <begin position="10"/>
        <end position="21"/>
    </location>
</feature>
<feature type="mutagenesis site" description="Normal targeting to the chloroplast." evidence="3">
    <original>TVVVAAMALGWL</original>
    <variation>AAAAAAAAAAAA</variation>
    <variation>IIIIIIIIIIIIL</variation>
    <location>
        <begin position="11"/>
        <end position="22"/>
    </location>
</feature>
<feature type="mutagenesis site" description="Reduced efficiency of chloroplast-targeting." evidence="3">
    <original>A</original>
    <variation>P</variation>
    <location>
        <position position="15"/>
    </location>
</feature>
<feature type="mutagenesis site" description="Impaired chloroplast-targeting." evidence="3">
    <original>L</original>
    <variation>P</variation>
    <location>
        <position position="19"/>
    </location>
</feature>
<feature type="mutagenesis site" description="Reduced efficiency of chloroplast-targeting." evidence="3">
    <original>A</original>
    <variation>P</variation>
    <location>
        <position position="23"/>
    </location>
</feature>
<feature type="mutagenesis site" description="Impaired targeting to the chloroplast outer membrane leading to plasma membrane localization; when associated with G-34." evidence="3">
    <original>K</original>
    <variation>G</variation>
    <location>
        <position position="29"/>
    </location>
</feature>
<feature type="mutagenesis site" description="Impaired targeting to the chloroplast outer membrane leading to plasma membrane localization." evidence="3">
    <original>D</original>
    <variation>G</variation>
    <location>
        <position position="33"/>
    </location>
</feature>
<feature type="mutagenesis site" description="Impaired targeting to the chloroplast outer membrane leading to plasma membrane localization; when associated with G-29." evidence="3">
    <original>K</original>
    <variation>G</variation>
    <location>
        <position position="34"/>
    </location>
</feature>
<reference key="1">
    <citation type="journal article" date="2000" name="Nature">
        <title>Sequence and analysis of chromosome 3 of the plant Arabidopsis thaliana.</title>
        <authorList>
            <person name="Salanoubat M."/>
            <person name="Lemcke K."/>
            <person name="Rieger M."/>
            <person name="Ansorge W."/>
            <person name="Unseld M."/>
            <person name="Fartmann B."/>
            <person name="Valle G."/>
            <person name="Bloecker H."/>
            <person name="Perez-Alonso M."/>
            <person name="Obermaier B."/>
            <person name="Delseny M."/>
            <person name="Boutry M."/>
            <person name="Grivell L.A."/>
            <person name="Mache R."/>
            <person name="Puigdomenech P."/>
            <person name="De Simone V."/>
            <person name="Choisne N."/>
            <person name="Artiguenave F."/>
            <person name="Robert C."/>
            <person name="Brottier P."/>
            <person name="Wincker P."/>
            <person name="Cattolico L."/>
            <person name="Weissenbach J."/>
            <person name="Saurin W."/>
            <person name="Quetier F."/>
            <person name="Schaefer M."/>
            <person name="Mueller-Auer S."/>
            <person name="Gabel C."/>
            <person name="Fuchs M."/>
            <person name="Benes V."/>
            <person name="Wurmbach E."/>
            <person name="Drzonek H."/>
            <person name="Erfle H."/>
            <person name="Jordan N."/>
            <person name="Bangert S."/>
            <person name="Wiedelmann R."/>
            <person name="Kranz H."/>
            <person name="Voss H."/>
            <person name="Holland R."/>
            <person name="Brandt P."/>
            <person name="Nyakatura G."/>
            <person name="Vezzi A."/>
            <person name="D'Angelo M."/>
            <person name="Pallavicini A."/>
            <person name="Toppo S."/>
            <person name="Simionati B."/>
            <person name="Conrad A."/>
            <person name="Hornischer K."/>
            <person name="Kauer G."/>
            <person name="Loehnert T.-H."/>
            <person name="Nordsiek G."/>
            <person name="Reichelt J."/>
            <person name="Scharfe M."/>
            <person name="Schoen O."/>
            <person name="Bargues M."/>
            <person name="Terol J."/>
            <person name="Climent J."/>
            <person name="Navarro P."/>
            <person name="Collado C."/>
            <person name="Perez-Perez A."/>
            <person name="Ottenwaelder B."/>
            <person name="Duchemin D."/>
            <person name="Cooke R."/>
            <person name="Laudie M."/>
            <person name="Berger-Llauro C."/>
            <person name="Purnelle B."/>
            <person name="Masuy D."/>
            <person name="de Haan M."/>
            <person name="Maarse A.C."/>
            <person name="Alcaraz J.-P."/>
            <person name="Cottet A."/>
            <person name="Casacuberta E."/>
            <person name="Monfort A."/>
            <person name="Argiriou A."/>
            <person name="Flores M."/>
            <person name="Liguori R."/>
            <person name="Vitale D."/>
            <person name="Mannhaupt G."/>
            <person name="Haase D."/>
            <person name="Schoof H."/>
            <person name="Rudd S."/>
            <person name="Zaccaria P."/>
            <person name="Mewes H.-W."/>
            <person name="Mayer K.F.X."/>
            <person name="Kaul S."/>
            <person name="Town C.D."/>
            <person name="Koo H.L."/>
            <person name="Tallon L.J."/>
            <person name="Jenkins J."/>
            <person name="Rooney T."/>
            <person name="Rizzo M."/>
            <person name="Walts A."/>
            <person name="Utterback T."/>
            <person name="Fujii C.Y."/>
            <person name="Shea T.P."/>
            <person name="Creasy T.H."/>
            <person name="Haas B."/>
            <person name="Maiti R."/>
            <person name="Wu D."/>
            <person name="Peterson J."/>
            <person name="Van Aken S."/>
            <person name="Pai G."/>
            <person name="Militscher J."/>
            <person name="Sellers P."/>
            <person name="Gill J.E."/>
            <person name="Feldblyum T.V."/>
            <person name="Preuss D."/>
            <person name="Lin X."/>
            <person name="Nierman W.C."/>
            <person name="Salzberg S.L."/>
            <person name="White O."/>
            <person name="Venter J.C."/>
            <person name="Fraser C.M."/>
            <person name="Kaneko T."/>
            <person name="Nakamura Y."/>
            <person name="Sato S."/>
            <person name="Kato T."/>
            <person name="Asamizu E."/>
            <person name="Sasamoto S."/>
            <person name="Kimura T."/>
            <person name="Idesawa K."/>
            <person name="Kawashima K."/>
            <person name="Kishida Y."/>
            <person name="Kiyokawa C."/>
            <person name="Kohara M."/>
            <person name="Matsumoto M."/>
            <person name="Matsuno A."/>
            <person name="Muraki A."/>
            <person name="Nakayama S."/>
            <person name="Nakazaki N."/>
            <person name="Shinpo S."/>
            <person name="Takeuchi C."/>
            <person name="Wada T."/>
            <person name="Watanabe A."/>
            <person name="Yamada M."/>
            <person name="Yasuda M."/>
            <person name="Tabata S."/>
        </authorList>
    </citation>
    <scope>NUCLEOTIDE SEQUENCE [LARGE SCALE GENOMIC DNA]</scope>
    <source>
        <strain>cv. Columbia</strain>
    </source>
</reference>
<reference key="2">
    <citation type="journal article" date="2017" name="Plant J.">
        <title>Araport11: a complete reannotation of the Arabidopsis thaliana reference genome.</title>
        <authorList>
            <person name="Cheng C.Y."/>
            <person name="Krishnakumar V."/>
            <person name="Chan A.P."/>
            <person name="Thibaud-Nissen F."/>
            <person name="Schobel S."/>
            <person name="Town C.D."/>
        </authorList>
    </citation>
    <scope>GENOME REANNOTATION</scope>
    <source>
        <strain>cv. Columbia</strain>
    </source>
</reference>
<reference key="3">
    <citation type="journal article" date="2003" name="Science">
        <title>Empirical analysis of transcriptional activity in the Arabidopsis genome.</title>
        <authorList>
            <person name="Yamada K."/>
            <person name="Lim J."/>
            <person name="Dale J.M."/>
            <person name="Chen H."/>
            <person name="Shinn P."/>
            <person name="Palm C.J."/>
            <person name="Southwick A.M."/>
            <person name="Wu H.C."/>
            <person name="Kim C.J."/>
            <person name="Nguyen M."/>
            <person name="Pham P.K."/>
            <person name="Cheuk R.F."/>
            <person name="Karlin-Newmann G."/>
            <person name="Liu S.X."/>
            <person name="Lam B."/>
            <person name="Sakano H."/>
            <person name="Wu T."/>
            <person name="Yu G."/>
            <person name="Miranda M."/>
            <person name="Quach H.L."/>
            <person name="Tripp M."/>
            <person name="Chang C.H."/>
            <person name="Lee J.M."/>
            <person name="Toriumi M.J."/>
            <person name="Chan M.M."/>
            <person name="Tang C.C."/>
            <person name="Onodera C.S."/>
            <person name="Deng J.M."/>
            <person name="Akiyama K."/>
            <person name="Ansari Y."/>
            <person name="Arakawa T."/>
            <person name="Banh J."/>
            <person name="Banno F."/>
            <person name="Bowser L."/>
            <person name="Brooks S.Y."/>
            <person name="Carninci P."/>
            <person name="Chao Q."/>
            <person name="Choy N."/>
            <person name="Enju A."/>
            <person name="Goldsmith A.D."/>
            <person name="Gurjal M."/>
            <person name="Hansen N.F."/>
            <person name="Hayashizaki Y."/>
            <person name="Johnson-Hopson C."/>
            <person name="Hsuan V.W."/>
            <person name="Iida K."/>
            <person name="Karnes M."/>
            <person name="Khan S."/>
            <person name="Koesema E."/>
            <person name="Ishida J."/>
            <person name="Jiang P.X."/>
            <person name="Jones T."/>
            <person name="Kawai J."/>
            <person name="Kamiya A."/>
            <person name="Meyers C."/>
            <person name="Nakajima M."/>
            <person name="Narusaka M."/>
            <person name="Seki M."/>
            <person name="Sakurai T."/>
            <person name="Satou M."/>
            <person name="Tamse R."/>
            <person name="Vaysberg M."/>
            <person name="Wallender E.K."/>
            <person name="Wong C."/>
            <person name="Yamamura Y."/>
            <person name="Yuan S."/>
            <person name="Shinozaki K."/>
            <person name="Davis R.W."/>
            <person name="Theologis A."/>
            <person name="Ecker J.R."/>
        </authorList>
    </citation>
    <scope>NUCLEOTIDE SEQUENCE [LARGE SCALE MRNA]</scope>
    <source>
        <strain>cv. Columbia</strain>
    </source>
</reference>
<reference key="4">
    <citation type="submission" date="2004-09" db="EMBL/GenBank/DDBJ databases">
        <title>Large-scale analysis of RIKEN Arabidopsis full-length (RAFL) cDNAs.</title>
        <authorList>
            <person name="Totoki Y."/>
            <person name="Seki M."/>
            <person name="Ishida J."/>
            <person name="Nakajima M."/>
            <person name="Enju A."/>
            <person name="Kamiya A."/>
            <person name="Narusaka M."/>
            <person name="Shin-i T."/>
            <person name="Nakagawa M."/>
            <person name="Sakamoto N."/>
            <person name="Oishi K."/>
            <person name="Kohara Y."/>
            <person name="Kobayashi M."/>
            <person name="Toyoda A."/>
            <person name="Sakaki Y."/>
            <person name="Sakurai T."/>
            <person name="Iida K."/>
            <person name="Akiyama K."/>
            <person name="Satou M."/>
            <person name="Toyoda T."/>
            <person name="Konagaya A."/>
            <person name="Carninci P."/>
            <person name="Kawai J."/>
            <person name="Hayashizaki Y."/>
            <person name="Shinozaki K."/>
        </authorList>
    </citation>
    <scope>NUCLEOTIDE SEQUENCE [LARGE SCALE MRNA]</scope>
    <source>
        <strain>cv. Columbia</strain>
    </source>
</reference>
<reference key="5">
    <citation type="journal article" date="2001" name="Plant Cell">
        <title>Identification of a signal that distinguishes between the chloroplast outer envelope membrane and the endomembrane system in vivo.</title>
        <authorList>
            <person name="Lee Y.J."/>
            <person name="Kim D.H."/>
            <person name="Kim Y.-W."/>
            <person name="Hwang I."/>
        </authorList>
    </citation>
    <scope>SUBCELLULAR LOCATION</scope>
    <scope>TISSUE SPECIFICITY</scope>
    <scope>DOMAIN</scope>
    <scope>MUTAGENESIS OF 10-ALA--LEU-22; ALA-15; LEU-19; ALA-23; LYS-29; ASP-33 AND LYS-34</scope>
    <source>
        <strain>cv. Columbia</strain>
    </source>
</reference>
<reference key="6">
    <citation type="journal article" date="2007" name="Plant Cell">
        <title>PIC1, an ancient permease in Arabidopsis chloroplasts, mediates iron transport.</title>
        <authorList>
            <person name="Duy D."/>
            <person name="Wanner G."/>
            <person name="Meda A.R."/>
            <person name="von Wiren N."/>
            <person name="Soll J."/>
            <person name="Philippar K."/>
        </authorList>
    </citation>
    <scope>SUBCELLULAR LOCATION</scope>
</reference>
<reference key="7">
    <citation type="journal article" date="2008" name="Nat. Cell Biol.">
        <title>AKR2A-mediated import of chloroplast outer membrane proteins is essential for chloroplast biogenesis.</title>
        <authorList>
            <person name="Bae W."/>
            <person name="Lee Y.J."/>
            <person name="Kim D.H."/>
            <person name="Lee J."/>
            <person name="Kim S."/>
            <person name="Sohn E.J."/>
            <person name="Hwang I."/>
        </authorList>
    </citation>
    <scope>SUBCELLULAR LOCATION</scope>
    <scope>INTERACTION WITH AKR2A</scope>
    <source>
        <strain>cv. Columbia</strain>
    </source>
</reference>
<reference key="8">
    <citation type="journal article" date="2008" name="Plant Physiol.">
        <title>Chloroplast outer envelope protein CHUP1 is essential for chloroplast anchorage to the plasma membrane and chloroplast movement.</title>
        <authorList>
            <person name="Oikawa K."/>
            <person name="Yamasato A."/>
            <person name="Kong S.-G."/>
            <person name="Kasahara M."/>
            <person name="Nakai M."/>
            <person name="Takahashi F."/>
            <person name="Ogura Y."/>
            <person name="Kagawa T."/>
            <person name="Wada M."/>
        </authorList>
    </citation>
    <scope>SUBCELLULAR LOCATION</scope>
</reference>
<reference key="9">
    <citation type="journal article" date="2010" name="Plant Signal. Behav.">
        <title>Is AKR2A an essential molecular chaperone for a class of membrane-bound proteins in plants?</title>
        <authorList>
            <person name="Zhang H."/>
            <person name="Li X."/>
            <person name="Zhang Y."/>
            <person name="Kuppu S."/>
            <person name="Shen G."/>
        </authorList>
    </citation>
    <scope>AKR2A-BINDING SEQUENCE</scope>
    <scope>REVIEW</scope>
</reference>
<reference key="10">
    <citation type="journal article" date="2011" name="Plant Physiol.">
        <title>Small heat shock protein Hsp17.8 functions as an AKR2A cofactor in the targeting of chloroplast outer membrane proteins in Arabidopsis.</title>
        <authorList>
            <person name="Kim D.H."/>
            <person name="Xu Z.-Y."/>
            <person name="Na Y.J."/>
            <person name="Yoo Y.-J."/>
            <person name="Lee J."/>
            <person name="Sohn E.-J."/>
            <person name="Hwang I."/>
        </authorList>
    </citation>
    <scope>SUBCELLULAR LOCATION</scope>
    <source>
        <strain>cv. Columbia</strain>
    </source>
</reference>
<dbReference type="EMBL" id="AL050300">
    <property type="protein sequence ID" value="CAB43440.1"/>
    <property type="molecule type" value="Genomic_DNA"/>
</dbReference>
<dbReference type="EMBL" id="CP002686">
    <property type="protein sequence ID" value="AEE78944.1"/>
    <property type="molecule type" value="Genomic_DNA"/>
</dbReference>
<dbReference type="EMBL" id="BT010511">
    <property type="protein sequence ID" value="AAQ65134.1"/>
    <property type="molecule type" value="mRNA"/>
</dbReference>
<dbReference type="EMBL" id="AK175275">
    <property type="protein sequence ID" value="BAD43038.1"/>
    <property type="molecule type" value="mRNA"/>
</dbReference>
<dbReference type="EMBL" id="AK175812">
    <property type="protein sequence ID" value="BAD43575.1"/>
    <property type="molecule type" value="mRNA"/>
</dbReference>
<dbReference type="PIR" id="T08457">
    <property type="entry name" value="T08457"/>
</dbReference>
<dbReference type="RefSeq" id="NP_190810.1">
    <property type="nucleotide sequence ID" value="NM_115102.3"/>
</dbReference>
<dbReference type="SMR" id="Q9SVC4"/>
<dbReference type="FunCoup" id="Q9SVC4">
    <property type="interactions" value="42"/>
</dbReference>
<dbReference type="STRING" id="3702.Q9SVC4"/>
<dbReference type="iPTMnet" id="Q9SVC4"/>
<dbReference type="PaxDb" id="3702-AT3G52420.1"/>
<dbReference type="ProteomicsDB" id="238921"/>
<dbReference type="EnsemblPlants" id="AT3G52420.1">
    <property type="protein sequence ID" value="AT3G52420.1"/>
    <property type="gene ID" value="AT3G52420"/>
</dbReference>
<dbReference type="GeneID" id="824407"/>
<dbReference type="Gramene" id="AT3G52420.1">
    <property type="protein sequence ID" value="AT3G52420.1"/>
    <property type="gene ID" value="AT3G52420"/>
</dbReference>
<dbReference type="KEGG" id="ath:AT3G52420"/>
<dbReference type="Araport" id="AT3G52420"/>
<dbReference type="TAIR" id="AT3G52420">
    <property type="gene designation" value="OEP7"/>
</dbReference>
<dbReference type="eggNOG" id="ENOG502S8H4">
    <property type="taxonomic scope" value="Eukaryota"/>
</dbReference>
<dbReference type="HOGENOM" id="CLU_187971_0_0_1"/>
<dbReference type="InParanoid" id="Q9SVC4"/>
<dbReference type="OMA" id="WWTIEIA"/>
<dbReference type="OrthoDB" id="754892at2759"/>
<dbReference type="PhylomeDB" id="Q9SVC4"/>
<dbReference type="PRO" id="PR:Q9SVC4"/>
<dbReference type="Proteomes" id="UP000006548">
    <property type="component" value="Chromosome 3"/>
</dbReference>
<dbReference type="ExpressionAtlas" id="Q9SVC4">
    <property type="expression patterns" value="baseline and differential"/>
</dbReference>
<dbReference type="GO" id="GO:0009707">
    <property type="term" value="C:chloroplast outer membrane"/>
    <property type="evidence" value="ECO:0000314"/>
    <property type="project" value="UniProtKB"/>
</dbReference>
<dbReference type="InterPro" id="IPR038944">
    <property type="entry name" value="OEP7-like"/>
</dbReference>
<dbReference type="PANTHER" id="PTHR33982:SF5">
    <property type="entry name" value="OUTER ENVELOPE MEMBRANE PROTEIN 7"/>
    <property type="match status" value="1"/>
</dbReference>
<dbReference type="PANTHER" id="PTHR33982">
    <property type="entry name" value="OUTER ENVELOPE MEMBRANE PROTEIN 7-RELATED"/>
    <property type="match status" value="1"/>
</dbReference>
<accession>Q9SVC4</accession>